<comment type="function">
    <text>Key enzyme in folate metabolism. Catalyzes an essential reaction for de novo glycine and purine synthesis, and for DNA precursor synthesis.</text>
</comment>
<comment type="catalytic activity">
    <reaction evidence="1 2">
        <text>(6S)-5,6,7,8-tetrahydrofolate + NADP(+) = 7,8-dihydrofolate + NADPH + H(+)</text>
        <dbReference type="Rhea" id="RHEA:15009"/>
        <dbReference type="ChEBI" id="CHEBI:15378"/>
        <dbReference type="ChEBI" id="CHEBI:57451"/>
        <dbReference type="ChEBI" id="CHEBI:57453"/>
        <dbReference type="ChEBI" id="CHEBI:57783"/>
        <dbReference type="ChEBI" id="CHEBI:58349"/>
        <dbReference type="EC" id="1.5.1.3"/>
    </reaction>
</comment>
<comment type="pathway">
    <text>Cofactor biosynthesis; tetrahydrofolate biosynthesis; 5,6,7,8-tetrahydrofolate from 7,8-dihydrofolate: step 1/1.</text>
</comment>
<comment type="interaction">
    <interactant intactId="EBI-550404">
        <id>P0ABQ4</id>
    </interactant>
    <interactant intactId="EBI-553024">
        <id>P77609</id>
        <label>flxA</label>
    </interactant>
    <organismsDiffer>false</organismsDiffer>
    <experiments>4</experiments>
</comment>
<comment type="miscellaneous">
    <text>The strain K12 sequence is shown.</text>
</comment>
<comment type="miscellaneous">
    <text>Strain B [RT500] is resistant to 500 micrograms per milliliter of trimethoprim.</text>
</comment>
<comment type="miscellaneous">
    <text>Strain B [MB1428] is methotrexate-resistant.</text>
</comment>
<comment type="similarity">
    <text evidence="4">Belongs to the dihydrofolate reductase family.</text>
</comment>
<accession>P0ABQ4</accession>
<accession>P00379</accession>
<keyword id="KW-0002">3D-structure</keyword>
<keyword id="KW-0046">Antibiotic resistance</keyword>
<keyword id="KW-0903">Direct protein sequencing</keyword>
<keyword id="KW-0487">Methotrexate resistance</keyword>
<keyword id="KW-0521">NADP</keyword>
<keyword id="KW-0554">One-carbon metabolism</keyword>
<keyword id="KW-0560">Oxidoreductase</keyword>
<keyword id="KW-1185">Reference proteome</keyword>
<keyword id="KW-0817">Trimethoprim resistance</keyword>
<feature type="chain" id="PRO_0000186387" description="Dihydrofolate reductase">
    <location>
        <begin position="1"/>
        <end position="159"/>
    </location>
</feature>
<feature type="domain" description="DHFR" evidence="1">
    <location>
        <begin position="1"/>
        <end position="158"/>
    </location>
</feature>
<feature type="binding site" evidence="5">
    <location>
        <position position="5"/>
    </location>
    <ligand>
        <name>substrate</name>
    </ligand>
</feature>
<feature type="binding site" evidence="3">
    <location>
        <position position="7"/>
    </location>
    <ligand>
        <name>NADP(+)</name>
        <dbReference type="ChEBI" id="CHEBI:58349"/>
    </ligand>
</feature>
<feature type="binding site" evidence="3">
    <location>
        <begin position="13"/>
        <end position="19"/>
    </location>
    <ligand>
        <name>NADP(+)</name>
        <dbReference type="ChEBI" id="CHEBI:58349"/>
    </ligand>
</feature>
<feature type="binding site" evidence="5">
    <location>
        <position position="27"/>
    </location>
    <ligand>
        <name>substrate</name>
    </ligand>
</feature>
<feature type="binding site" evidence="3">
    <location>
        <begin position="45"/>
        <end position="46"/>
    </location>
    <ligand>
        <name>NADP(+)</name>
        <dbReference type="ChEBI" id="CHEBI:58349"/>
    </ligand>
</feature>
<feature type="binding site" evidence="5">
    <location>
        <position position="52"/>
    </location>
    <ligand>
        <name>substrate</name>
    </ligand>
</feature>
<feature type="binding site" evidence="5">
    <location>
        <position position="57"/>
    </location>
    <ligand>
        <name>substrate</name>
    </ligand>
</feature>
<feature type="binding site" evidence="3">
    <location>
        <begin position="63"/>
        <end position="64"/>
    </location>
    <ligand>
        <name>NADP(+)</name>
        <dbReference type="ChEBI" id="CHEBI:58349"/>
    </ligand>
</feature>
<feature type="binding site" evidence="3">
    <location>
        <position position="76"/>
    </location>
    <ligand>
        <name>NADP(+)</name>
        <dbReference type="ChEBI" id="CHEBI:58349"/>
    </ligand>
</feature>
<feature type="binding site" evidence="3">
    <location>
        <begin position="95"/>
        <end position="102"/>
    </location>
    <ligand>
        <name>NADP(+)</name>
        <dbReference type="ChEBI" id="CHEBI:58349"/>
    </ligand>
</feature>
<feature type="binding site" evidence="5">
    <location>
        <position position="113"/>
    </location>
    <ligand>
        <name>substrate</name>
    </ligand>
</feature>
<feature type="sequence variant" description="In strain: B[RT500] isozyme 2.">
    <original>L</original>
    <variation>R</variation>
    <location>
        <position position="28"/>
    </location>
</feature>
<feature type="sequence variant" description="In strain: 1810.">
    <original>W</original>
    <variation>G</variation>
    <location>
        <position position="30"/>
    </location>
</feature>
<feature type="sequence variant" description="In strain: B[MB1428].">
    <original>E</original>
    <variation>K</variation>
    <location>
        <position position="154"/>
    </location>
</feature>
<feature type="sequence variant" description="In strain: 1810.">
    <original>E</original>
    <variation>Q</variation>
    <location>
        <position position="154"/>
    </location>
</feature>
<feature type="mutagenesis site" description="Increases catalytic rate about 2-fold." evidence="2">
    <original>M</original>
    <variation>F</variation>
    <variation>S</variation>
    <location>
        <position position="16"/>
    </location>
</feature>
<feature type="mutagenesis site" description="Increases catalytic rate about 2-fold. Increases catalytic rate about 7-fold; when associated with L-20; Y-42; F-92; A-85 and S-152." evidence="2">
    <original>M</original>
    <variation>N</variation>
    <location>
        <position position="16"/>
    </location>
</feature>
<feature type="mutagenesis site" description="Increases catalytic rate 2-fold." evidence="2">
    <original>M</original>
    <variation>I</variation>
    <variation>V</variation>
    <location>
        <position position="20"/>
    </location>
</feature>
<feature type="mutagenesis site" description="Increases catalytic rate 2.5-fold. Increases catalytic rate about 7-fold; when associated with N-16; Y-42; F-92; A-85 and S-152." evidence="2">
    <original>M</original>
    <variation>L</variation>
    <location>
        <position position="20"/>
    </location>
</feature>
<feature type="mutagenesis site" description="Increases catalytic rate almost 2-fold." evidence="2">
    <original>M</original>
    <variation>V</variation>
    <location>
        <position position="42"/>
    </location>
</feature>
<feature type="mutagenesis site" description="Increases catalytic rate almost 2-fold. Increases catalytic rate about 7-fold; when associated with N-16; L-20; A-85; F-92 and S-152." evidence="2">
    <original>M</original>
    <variation>Y</variation>
    <location>
        <position position="42"/>
    </location>
</feature>
<feature type="mutagenesis site" description="Decreases catalytic rate by one third. Increases catalytic rate about 7-fold; when associated with N-16; L-20; Y-42; F-92 and S-152." evidence="2">
    <original>C</original>
    <variation>A</variation>
    <location>
        <position position="85"/>
    </location>
</feature>
<feature type="mutagenesis site" description="No effect. Increases catalytic rate about 7-fold; when associated with N-16; L-20; Y-42; A-85 and S-152." evidence="2">
    <original>M</original>
    <variation>F</variation>
    <location>
        <position position="92"/>
    </location>
</feature>
<feature type="mutagenesis site" description="No effect." evidence="2">
    <original>M</original>
    <variation>L</variation>
    <location>
        <position position="92"/>
    </location>
</feature>
<feature type="mutagenesis site" description="Increases catalytic rate 1.5-fold. Increases catalytic rate about 7-fold; when associated with N-16; L-20; Y-42; A-85 and F-92." evidence="2">
    <original>C</original>
    <variation>S</variation>
    <location>
        <position position="152"/>
    </location>
</feature>
<feature type="strand" evidence="9">
    <location>
        <begin position="2"/>
        <end position="8"/>
    </location>
</feature>
<feature type="helix" evidence="9">
    <location>
        <begin position="10"/>
        <end position="12"/>
    </location>
</feature>
<feature type="strand" evidence="10">
    <location>
        <begin position="13"/>
        <end position="16"/>
    </location>
</feature>
<feature type="helix" evidence="9">
    <location>
        <begin position="17"/>
        <end position="19"/>
    </location>
</feature>
<feature type="turn" evidence="8">
    <location>
        <begin position="20"/>
        <end position="23"/>
    </location>
</feature>
<feature type="helix" evidence="9">
    <location>
        <begin position="25"/>
        <end position="35"/>
    </location>
</feature>
<feature type="strand" evidence="9">
    <location>
        <begin position="40"/>
        <end position="43"/>
    </location>
</feature>
<feature type="helix" evidence="9">
    <location>
        <begin position="44"/>
        <end position="50"/>
    </location>
</feature>
<feature type="strand" evidence="7">
    <location>
        <begin position="55"/>
        <end position="57"/>
    </location>
</feature>
<feature type="strand" evidence="9">
    <location>
        <begin position="59"/>
        <end position="62"/>
    </location>
</feature>
<feature type="strand" evidence="9">
    <location>
        <begin position="72"/>
        <end position="77"/>
    </location>
</feature>
<feature type="helix" evidence="9">
    <location>
        <begin position="78"/>
        <end position="85"/>
    </location>
</feature>
<feature type="strand" evidence="9">
    <location>
        <begin position="91"/>
        <end position="93"/>
    </location>
</feature>
<feature type="helix" evidence="9">
    <location>
        <begin position="97"/>
        <end position="103"/>
    </location>
</feature>
<feature type="helix" evidence="9">
    <location>
        <begin position="104"/>
        <end position="106"/>
    </location>
</feature>
<feature type="strand" evidence="9">
    <location>
        <begin position="107"/>
        <end position="115"/>
    </location>
</feature>
<feature type="strand" evidence="10">
    <location>
        <begin position="122"/>
        <end position="124"/>
    </location>
</feature>
<feature type="helix" evidence="9">
    <location>
        <begin position="130"/>
        <end position="132"/>
    </location>
</feature>
<feature type="strand" evidence="9">
    <location>
        <begin position="133"/>
        <end position="141"/>
    </location>
</feature>
<feature type="strand" evidence="6">
    <location>
        <begin position="147"/>
        <end position="149"/>
    </location>
</feature>
<feature type="strand" evidence="9">
    <location>
        <begin position="151"/>
        <end position="158"/>
    </location>
</feature>
<reference key="1">
    <citation type="journal article" date="1977" name="Eur. J. Biochem.">
        <title>The amino-acid sequence of the dihydrofolate reductase of a trimethoprim-resistant strain of Escherichia coli.</title>
        <authorList>
            <person name="Stone D."/>
            <person name="Phillips A.W."/>
            <person name="Burchall J.J."/>
        </authorList>
    </citation>
    <scope>PROTEIN SEQUENCE (ISOZYME 1)</scope>
    <source>
        <strain>B [RT500]</strain>
    </source>
</reference>
<reference key="2">
    <citation type="journal article" date="1978" name="Biochemistry">
        <title>Dihydrofolate reductase: the amino acid sequence of the enzyme from a methotrexate-resistant mutant of Escherichia coli.</title>
        <authorList>
            <person name="Bennett C.D."/>
            <person name="Rodkey J.A."/>
            <person name="Sondey J.M."/>
            <person name="Hirschmann R."/>
        </authorList>
    </citation>
    <scope>PROTEIN SEQUENCE</scope>
    <source>
        <strain>B [MB1428]</strain>
    </source>
</reference>
<reference key="3">
    <citation type="journal article" date="1980" name="Nucleic Acids Res.">
        <title>Nucleotide sequence of the E coli gene coding for dihydrofolate reductase.</title>
        <authorList>
            <person name="Smith D.R."/>
            <person name="Calvo J.M."/>
        </authorList>
    </citation>
    <scope>NUCLEOTIDE SEQUENCE [GENOMIC DNA]</scope>
    <source>
        <strain>K12</strain>
    </source>
</reference>
<reference key="4">
    <citation type="journal article" date="1981" name="J. Biol. Chem.">
        <title>Effect of a single amino acid substitution on Escherichia coli dihydrofolate reductase catalysis and ligand binding.</title>
        <authorList>
            <person name="Baccanari D.P."/>
            <person name="Stone D."/>
            <person name="Kuyper L."/>
        </authorList>
    </citation>
    <scope>PROTEIN SEQUENCE (ISOZYME 2)</scope>
    <source>
        <strain>B [RT500]</strain>
    </source>
</reference>
<reference key="5">
    <citation type="journal article" date="1987" name="Eur. J. Biochem.">
        <title>Massive overproduction of dihydrofolate reductase in bacteria as a response to the use of trimethoprim.</title>
        <authorList>
            <person name="Flensburg J."/>
            <person name="Skoeld O."/>
        </authorList>
    </citation>
    <scope>NUCLEOTIDE SEQUENCE [GENOMIC DNA]</scope>
    <source>
        <strain>1810</strain>
    </source>
</reference>
<reference key="6">
    <citation type="journal article" date="1992" name="Nucleic Acids Res.">
        <title>Systematic sequencing of the Escherichia coli genome: analysis of the 0-2.4 min region.</title>
        <authorList>
            <person name="Yura T."/>
            <person name="Mori H."/>
            <person name="Nagai H."/>
            <person name="Nagata T."/>
            <person name="Ishihama A."/>
            <person name="Fujita N."/>
            <person name="Isono K."/>
            <person name="Mizobuchi K."/>
            <person name="Nakata A."/>
        </authorList>
    </citation>
    <scope>NUCLEOTIDE SEQUENCE [LARGE SCALE GENOMIC DNA]</scope>
    <source>
        <strain>K12</strain>
    </source>
</reference>
<reference key="7">
    <citation type="journal article" date="1997" name="Science">
        <title>The complete genome sequence of Escherichia coli K-12.</title>
        <authorList>
            <person name="Blattner F.R."/>
            <person name="Plunkett G. III"/>
            <person name="Bloch C.A."/>
            <person name="Perna N.T."/>
            <person name="Burland V."/>
            <person name="Riley M."/>
            <person name="Collado-Vides J."/>
            <person name="Glasner J.D."/>
            <person name="Rode C.K."/>
            <person name="Mayhew G.F."/>
            <person name="Gregor J."/>
            <person name="Davis N.W."/>
            <person name="Kirkpatrick H.A."/>
            <person name="Goeden M.A."/>
            <person name="Rose D.J."/>
            <person name="Mau B."/>
            <person name="Shao Y."/>
        </authorList>
    </citation>
    <scope>NUCLEOTIDE SEQUENCE [LARGE SCALE GENOMIC DNA]</scope>
    <source>
        <strain>K12 / MG1655 / ATCC 47076</strain>
    </source>
</reference>
<reference key="8">
    <citation type="journal article" date="2006" name="Mol. Syst. Biol.">
        <title>Highly accurate genome sequences of Escherichia coli K-12 strains MG1655 and W3110.</title>
        <authorList>
            <person name="Hayashi K."/>
            <person name="Morooka N."/>
            <person name="Yamamoto Y."/>
            <person name="Fujita K."/>
            <person name="Isono K."/>
            <person name="Choi S."/>
            <person name="Ohtsubo E."/>
            <person name="Baba T."/>
            <person name="Wanner B.L."/>
            <person name="Mori H."/>
            <person name="Horiuchi T."/>
        </authorList>
    </citation>
    <scope>NUCLEOTIDE SEQUENCE [LARGE SCALE GENOMIC DNA]</scope>
    <source>
        <strain>K12 / W3110 / ATCC 27325 / DSM 5911</strain>
    </source>
</reference>
<reference key="9">
    <citation type="journal article" date="1997" name="Electrophoresis">
        <title>Escherichia coli proteome analysis using the gene-protein database.</title>
        <authorList>
            <person name="VanBogelen R.A."/>
            <person name="Abshire K.Z."/>
            <person name="Moldover B."/>
            <person name="Olson E.R."/>
            <person name="Neidhardt F.C."/>
        </authorList>
    </citation>
    <scope>IDENTIFICATION BY 2D-GEL</scope>
</reference>
<reference key="10">
    <citation type="journal article" date="1982" name="J. Biol. Chem.">
        <title>Crystal structures of Escherichia coli and Lactobacillus casei dihydrofolate reductase refined at 1.7-A resolution. II. Environment of bound NADPH and implications for catalysis.</title>
        <authorList>
            <person name="Filman D.J."/>
            <person name="Bolin J.T."/>
            <person name="Matthews D.A."/>
            <person name="Kraut J."/>
        </authorList>
    </citation>
    <scope>X-RAY CRYSTALLOGRAPHY (1.7 ANGSTROMS)</scope>
</reference>
<reference key="11">
    <citation type="journal article" date="1990" name="Biochemistry">
        <title>Crystal structures of Escherichia coli dihydrofolate reductase: the NADP+ holoenzyme and the folate.NADP+ ternary complex. Substrate binding and a model for the transition state.</title>
        <authorList>
            <person name="Bystroff C."/>
            <person name="Oatley S.J."/>
            <person name="Kraut J."/>
        </authorList>
    </citation>
    <scope>X-RAY CRYSTALLOGRAPHY (2.4 ANGSTROMS)</scope>
</reference>
<reference key="12">
    <citation type="journal article" date="1991" name="Biochemistry">
        <title>Crystal structure of unliganded Escherichia coli dihydrofolate reductase. Ligand-induced conformational changes and cooperativity in binding.</title>
        <authorList>
            <person name="Bystroff C."/>
            <person name="Kraut J."/>
        </authorList>
    </citation>
    <scope>X-RAY CRYSTALLOGRAPHY (2.3 ANGSTROMS)</scope>
</reference>
<reference key="13">
    <citation type="journal article" date="1995" name="Biochemistry">
        <title>Isomorphous crystal structures of Escherichia coli dihydrofolate reductase complexed with folate, 5-deazafolate, and 5,10-dideazatetrahydrofolate: mechanistic implications.</title>
        <authorList>
            <person name="Reyes V.M."/>
            <person name="Sawaya M.R."/>
            <person name="Brown K.A."/>
            <person name="Kraut J."/>
        </authorList>
    </citation>
    <scope>X-RAY CRYSTALLOGRAPHY (1.85 ANGSTROMS) IN COMPLEXES WITH NADPH; FOLATE; 5-DEAZAFOLATE AND 5,10-DIDEAZATETRAHYDROFOLATE</scope>
</reference>
<reference key="14">
    <citation type="journal article" date="1996" name="Biochemistry">
        <title>Crystal structures of Escherichia coli dihydrofolate reductase complexed with 5-formyltetrahydrofolate (folinic acid) in two space groups: evidence for enolization of pteridine O4.</title>
        <authorList>
            <person name="Lee H."/>
            <person name="Reyes V.M."/>
            <person name="Kraut J."/>
        </authorList>
    </citation>
    <scope>X-RAY CRYSTALLOGRAPHY (1.90 ANGSTROMS) IN COMPLEX WITH 5-FORMYLTETRAHYDROFOLATE</scope>
</reference>
<reference key="15">
    <citation type="journal article" date="1997" name="Biochemistry">
        <title>Loop and subdomain movements in the mechanism of Escherichia coli dihydrofolate reductase: crystallographic evidence.</title>
        <authorList>
            <person name="Sawaya M.R."/>
            <person name="Kraut J."/>
        </authorList>
    </citation>
    <scope>X-RAY CRYSTALLOGRAPHY (1.55 ANGSTROMS) IN COMPLEXES WITH NADPH; METHOTREXATE AND TETRAHYDROFOLATE</scope>
</reference>
<reference key="16">
    <citation type="journal article" date="2006" name="J. Biol. Chem.">
        <title>Evolutional design of a hyperactive cysteine- and methionine-free mutant of Escherichia coli dihydrofolate reductase.</title>
        <authorList>
            <person name="Iwakura M."/>
            <person name="Maki K."/>
            <person name="Takahashi H."/>
            <person name="Takenawa T."/>
            <person name="Yokota A."/>
            <person name="Katayanagi K."/>
            <person name="Kamiyama T."/>
            <person name="Gekko K."/>
        </authorList>
    </citation>
    <scope>X-RAY CRYSTALLOGRAPHY (1.90 ANGSTROMS) IN COMPLEX WITH FOLATE</scope>
    <scope>CATALYTIC ACTIVITY</scope>
    <scope>MUTAGENESIS OF MET-16; MET-20; MET-42; CYS-85; MET-92 AND CYS-152</scope>
    <scope>IDENTIFICATION BY MASS SPECTROMETRY</scope>
</reference>
<reference key="17">
    <citation type="journal article" date="2006" name="J. Med. Chem.">
        <title>A 2.13 A structure of E. coli dihydrofolate reductase bound to a novel competitive inhibitor reveals a new binding surface involving the M20 loop region.</title>
        <authorList>
            <person name="Summerfield R.L."/>
            <person name="Daigle D.M."/>
            <person name="Mayer S."/>
            <person name="Mallik D."/>
            <person name="Hughes D.W."/>
            <person name="Jackson S.G."/>
            <person name="Sulek M."/>
            <person name="Organ M.G."/>
            <person name="Brown E.D."/>
            <person name="Junop M.S."/>
        </authorList>
    </citation>
    <scope>X-RAY CRYSTALLOGRAPHY (2.13 ANGSTROMS)</scope>
</reference>
<reference key="18">
    <citation type="journal article" date="2006" name="Proc. Natl. Acad. Sci. U.S.A.">
        <title>Neutron diffraction studies of Escherichia coli dihydrofolate reductase complexed with methotrexate.</title>
        <authorList>
            <person name="Bennett B."/>
            <person name="Langan P."/>
            <person name="Coates L."/>
            <person name="Mustyakimov M."/>
            <person name="Schoenborn B."/>
            <person name="Howell E.E."/>
            <person name="Dealwis C."/>
        </authorList>
    </citation>
    <scope>STRUCTURE BY NEUTRON DIFFRACTION (2.20 ANGSTROMS) IN COMPLEX WITH METHOTREXATE</scope>
</reference>
<reference key="19">
    <citation type="journal article" date="2009" name="J. Struct. Biol.">
        <title>X-ray structure of the ternary MTX.NADPH complex of the anthrax dihydrofolate reductase: a pharmacophore for dual-site inhibitor design.</title>
        <authorList>
            <person name="Bennett B.C."/>
            <person name="Wan Q."/>
            <person name="Ahmad M.F."/>
            <person name="Langan P."/>
            <person name="Dealwis C.G."/>
        </authorList>
    </citation>
    <scope>X-RAY CRYSTALLOGRAPHY (1.50 ANGSTROMS) IN COMPLEX WITH METHOTREXATE AND NADPH</scope>
</reference>
<name>DYR_ECOLI</name>
<organism>
    <name type="scientific">Escherichia coli (strain K12)</name>
    <dbReference type="NCBI Taxonomy" id="83333"/>
    <lineage>
        <taxon>Bacteria</taxon>
        <taxon>Pseudomonadati</taxon>
        <taxon>Pseudomonadota</taxon>
        <taxon>Gammaproteobacteria</taxon>
        <taxon>Enterobacterales</taxon>
        <taxon>Enterobacteriaceae</taxon>
        <taxon>Escherichia</taxon>
    </lineage>
</organism>
<protein>
    <recommendedName>
        <fullName>Dihydrofolate reductase</fullName>
        <ecNumber>1.5.1.3</ecNumber>
    </recommendedName>
</protein>
<sequence>MISLIAALAVDRVIGMENAMPWNLPADLAWFKRNTLNKPVIMGRHTWESIGRPLPGRKNIILSSQPGTDDRVTWVKSVDEAIAACGDVPEIMVIGGGRVYEQFLPKAQKLYLTHIDAEVEGDTHFPDYEPDDWESVFSEFHDADAQNSHSYCFEILERR</sequence>
<proteinExistence type="evidence at protein level"/>
<evidence type="ECO:0000255" key="1">
    <source>
        <dbReference type="PROSITE-ProRule" id="PRU00660"/>
    </source>
</evidence>
<evidence type="ECO:0000269" key="2">
    <source>
    </source>
</evidence>
<evidence type="ECO:0000269" key="3">
    <source>
    </source>
</evidence>
<evidence type="ECO:0000305" key="4"/>
<evidence type="ECO:0000305" key="5">
    <source>
    </source>
</evidence>
<evidence type="ECO:0007829" key="6">
    <source>
        <dbReference type="PDB" id="4KJJ"/>
    </source>
</evidence>
<evidence type="ECO:0007829" key="7">
    <source>
        <dbReference type="PDB" id="4X5J"/>
    </source>
</evidence>
<evidence type="ECO:0007829" key="8">
    <source>
        <dbReference type="PDB" id="5UIH"/>
    </source>
</evidence>
<evidence type="ECO:0007829" key="9">
    <source>
        <dbReference type="PDB" id="6CW7"/>
    </source>
</evidence>
<evidence type="ECO:0007829" key="10">
    <source>
        <dbReference type="PDB" id="7FPP"/>
    </source>
</evidence>
<gene>
    <name type="primary">folA</name>
    <name type="synonym">tmrA</name>
    <name type="ordered locus">b0048</name>
    <name type="ordered locus">JW0047</name>
</gene>
<dbReference type="EC" id="1.5.1.3"/>
<dbReference type="EMBL" id="J01609">
    <property type="protein sequence ID" value="AAA87976.1"/>
    <property type="molecule type" value="Genomic_DNA"/>
</dbReference>
<dbReference type="EMBL" id="X05108">
    <property type="protein sequence ID" value="CAA28755.1"/>
    <property type="molecule type" value="Genomic_DNA"/>
</dbReference>
<dbReference type="EMBL" id="U00096">
    <property type="protein sequence ID" value="AAC73159.1"/>
    <property type="molecule type" value="Genomic_DNA"/>
</dbReference>
<dbReference type="EMBL" id="AP009048">
    <property type="protein sequence ID" value="BAB96616.1"/>
    <property type="molecule type" value="Genomic_DNA"/>
</dbReference>
<dbReference type="PIR" id="A93704">
    <property type="entry name" value="RDECD"/>
</dbReference>
<dbReference type="RefSeq" id="NP_414590.1">
    <property type="nucleotide sequence ID" value="NC_000913.3"/>
</dbReference>
<dbReference type="RefSeq" id="WP_000624375.1">
    <property type="nucleotide sequence ID" value="NZ_STEB01000010.1"/>
</dbReference>
<dbReference type="PDB" id="1DDR">
    <property type="method" value="X-ray"/>
    <property type="resolution" value="2.45 A"/>
    <property type="chains" value="A/B=1-159"/>
</dbReference>
<dbReference type="PDB" id="1DDS">
    <property type="method" value="X-ray"/>
    <property type="resolution" value="2.20 A"/>
    <property type="chains" value="A/B=1-159"/>
</dbReference>
<dbReference type="PDB" id="1DHI">
    <property type="method" value="X-ray"/>
    <property type="resolution" value="1.90 A"/>
    <property type="chains" value="A/B=1-159"/>
</dbReference>
<dbReference type="PDB" id="1DHJ">
    <property type="method" value="X-ray"/>
    <property type="resolution" value="1.80 A"/>
    <property type="chains" value="A/B=1-159"/>
</dbReference>
<dbReference type="PDB" id="1DRA">
    <property type="method" value="X-ray"/>
    <property type="resolution" value="1.90 A"/>
    <property type="chains" value="A/B=1-159"/>
</dbReference>
<dbReference type="PDB" id="1DRB">
    <property type="method" value="X-ray"/>
    <property type="resolution" value="1.96 A"/>
    <property type="chains" value="A/B=1-159"/>
</dbReference>
<dbReference type="PDB" id="1DRE">
    <property type="method" value="X-ray"/>
    <property type="resolution" value="2.60 A"/>
    <property type="chains" value="A=1-159"/>
</dbReference>
<dbReference type="PDB" id="1DRH">
    <property type="method" value="X-ray"/>
    <property type="resolution" value="2.30 A"/>
    <property type="chains" value="A=1-159"/>
</dbReference>
<dbReference type="PDB" id="1DYH">
    <property type="method" value="X-ray"/>
    <property type="resolution" value="1.90 A"/>
    <property type="chains" value="A/B=1-159"/>
</dbReference>
<dbReference type="PDB" id="1DYI">
    <property type="method" value="X-ray"/>
    <property type="resolution" value="1.90 A"/>
    <property type="chains" value="A/B=1-159"/>
</dbReference>
<dbReference type="PDB" id="1DYJ">
    <property type="method" value="X-ray"/>
    <property type="resolution" value="1.85 A"/>
    <property type="chains" value="A/B=1-159"/>
</dbReference>
<dbReference type="PDB" id="1JOL">
    <property type="method" value="X-ray"/>
    <property type="resolution" value="1.96 A"/>
    <property type="chains" value="A/B=1-159"/>
</dbReference>
<dbReference type="PDB" id="1JOM">
    <property type="method" value="X-ray"/>
    <property type="resolution" value="1.90 A"/>
    <property type="chains" value="A=1-159"/>
</dbReference>
<dbReference type="PDB" id="1RA1">
    <property type="method" value="X-ray"/>
    <property type="resolution" value="1.90 A"/>
    <property type="chains" value="A=1-159"/>
</dbReference>
<dbReference type="PDB" id="1RA2">
    <property type="method" value="X-ray"/>
    <property type="resolution" value="1.60 A"/>
    <property type="chains" value="A=1-159"/>
</dbReference>
<dbReference type="PDB" id="1RA3">
    <property type="method" value="X-ray"/>
    <property type="resolution" value="1.80 A"/>
    <property type="chains" value="A=1-159"/>
</dbReference>
<dbReference type="PDB" id="1RA8">
    <property type="method" value="X-ray"/>
    <property type="resolution" value="1.80 A"/>
    <property type="chains" value="A=1-159"/>
</dbReference>
<dbReference type="PDB" id="1RA9">
    <property type="method" value="X-ray"/>
    <property type="resolution" value="1.55 A"/>
    <property type="chains" value="A=1-159"/>
</dbReference>
<dbReference type="PDB" id="1RB2">
    <property type="method" value="X-ray"/>
    <property type="resolution" value="2.10 A"/>
    <property type="chains" value="A/B=1-159"/>
</dbReference>
<dbReference type="PDB" id="1RB3">
    <property type="method" value="X-ray"/>
    <property type="resolution" value="2.30 A"/>
    <property type="chains" value="A/B=1-159"/>
</dbReference>
<dbReference type="PDB" id="1RC4">
    <property type="method" value="X-ray"/>
    <property type="resolution" value="1.90 A"/>
    <property type="chains" value="A=1-159"/>
</dbReference>
<dbReference type="PDB" id="1RD7">
    <property type="method" value="X-ray"/>
    <property type="resolution" value="2.60 A"/>
    <property type="chains" value="A/B=1-159"/>
</dbReference>
<dbReference type="PDB" id="1RE7">
    <property type="method" value="X-ray"/>
    <property type="resolution" value="2.60 A"/>
    <property type="chains" value="A/B=1-159"/>
</dbReference>
<dbReference type="PDB" id="1RF7">
    <property type="method" value="X-ray"/>
    <property type="resolution" value="1.80 A"/>
    <property type="chains" value="A=1-159"/>
</dbReference>
<dbReference type="PDB" id="1RG7">
    <property type="method" value="X-ray"/>
    <property type="resolution" value="2.00 A"/>
    <property type="chains" value="A=1-159"/>
</dbReference>
<dbReference type="PDB" id="1RH3">
    <property type="method" value="X-ray"/>
    <property type="resolution" value="2.40 A"/>
    <property type="chains" value="A=1-159"/>
</dbReference>
<dbReference type="PDB" id="1RX1">
    <property type="method" value="X-ray"/>
    <property type="resolution" value="2.00 A"/>
    <property type="chains" value="A=1-159"/>
</dbReference>
<dbReference type="PDB" id="1RX2">
    <property type="method" value="X-ray"/>
    <property type="resolution" value="1.80 A"/>
    <property type="chains" value="A=1-159"/>
</dbReference>
<dbReference type="PDB" id="1RX3">
    <property type="method" value="X-ray"/>
    <property type="resolution" value="2.20 A"/>
    <property type="chains" value="A=1-159"/>
</dbReference>
<dbReference type="PDB" id="1RX4">
    <property type="method" value="X-ray"/>
    <property type="resolution" value="2.20 A"/>
    <property type="chains" value="A=1-159"/>
</dbReference>
<dbReference type="PDB" id="1RX5">
    <property type="method" value="X-ray"/>
    <property type="resolution" value="2.30 A"/>
    <property type="chains" value="A=1-159"/>
</dbReference>
<dbReference type="PDB" id="1RX6">
    <property type="method" value="X-ray"/>
    <property type="resolution" value="2.00 A"/>
    <property type="chains" value="A=1-159"/>
</dbReference>
<dbReference type="PDB" id="1RX7">
    <property type="method" value="X-ray"/>
    <property type="resolution" value="2.30 A"/>
    <property type="chains" value="A=1-159"/>
</dbReference>
<dbReference type="PDB" id="1RX8">
    <property type="method" value="X-ray"/>
    <property type="resolution" value="2.80 A"/>
    <property type="chains" value="A=1-159"/>
</dbReference>
<dbReference type="PDB" id="1RX9">
    <property type="method" value="X-ray"/>
    <property type="resolution" value="1.90 A"/>
    <property type="chains" value="A=1-159"/>
</dbReference>
<dbReference type="PDB" id="1TDR">
    <property type="method" value="X-ray"/>
    <property type="resolution" value="2.50 A"/>
    <property type="chains" value="A/B=1-159"/>
</dbReference>
<dbReference type="PDB" id="2ANO">
    <property type="method" value="X-ray"/>
    <property type="resolution" value="2.68 A"/>
    <property type="chains" value="A=1-159"/>
</dbReference>
<dbReference type="PDB" id="2ANQ">
    <property type="method" value="X-ray"/>
    <property type="resolution" value="2.13 A"/>
    <property type="chains" value="A=1-159"/>
</dbReference>
<dbReference type="PDB" id="2D0K">
    <property type="method" value="X-ray"/>
    <property type="resolution" value="1.90 A"/>
    <property type="chains" value="A/B=2-159"/>
</dbReference>
<dbReference type="PDB" id="2DRC">
    <property type="method" value="X-ray"/>
    <property type="resolution" value="1.90 A"/>
    <property type="chains" value="A/B=1-159"/>
</dbReference>
<dbReference type="PDB" id="2INQ">
    <property type="method" value="Neutron"/>
    <property type="resolution" value="2.20 A"/>
    <property type="chains" value="A/B=1-159"/>
</dbReference>
<dbReference type="PDB" id="3DAU">
    <property type="method" value="X-ray"/>
    <property type="resolution" value="1.50 A"/>
    <property type="chains" value="A=1-159"/>
</dbReference>
<dbReference type="PDB" id="3DRC">
    <property type="method" value="X-ray"/>
    <property type="resolution" value="1.90 A"/>
    <property type="chains" value="A/B=1-159"/>
</dbReference>
<dbReference type="PDB" id="3K74">
    <property type="method" value="X-ray"/>
    <property type="resolution" value="1.95 A"/>
    <property type="chains" value="A=1-159"/>
</dbReference>
<dbReference type="PDB" id="3KFY">
    <property type="method" value="X-ray"/>
    <property type="resolution" value="2.08 A"/>
    <property type="chains" value="A=1-159"/>
</dbReference>
<dbReference type="PDB" id="3OCH">
    <property type="method" value="X-ray"/>
    <property type="resolution" value="1.79 A"/>
    <property type="chains" value="A/B=1-159"/>
</dbReference>
<dbReference type="PDB" id="3QL3">
    <property type="method" value="X-ray"/>
    <property type="resolution" value="1.80 A"/>
    <property type="chains" value="A=1-159"/>
</dbReference>
<dbReference type="PDB" id="3QYL">
    <property type="method" value="X-ray"/>
    <property type="resolution" value="1.79 A"/>
    <property type="chains" value="A=1-159"/>
</dbReference>
<dbReference type="PDB" id="3QYO">
    <property type="method" value="X-ray"/>
    <property type="resolution" value="2.09 A"/>
    <property type="chains" value="A=1-159"/>
</dbReference>
<dbReference type="PDB" id="3R33">
    <property type="method" value="X-ray"/>
    <property type="resolution" value="2.09 A"/>
    <property type="chains" value="A=1-159"/>
</dbReference>
<dbReference type="PDB" id="4DFR">
    <property type="method" value="X-ray"/>
    <property type="resolution" value="1.70 A"/>
    <property type="chains" value="A/B=1-159"/>
</dbReference>
<dbReference type="PDB" id="4EIG">
    <property type="method" value="X-ray"/>
    <property type="resolution" value="2.50 A"/>
    <property type="chains" value="A=1-159"/>
</dbReference>
<dbReference type="PDB" id="4EIZ">
    <property type="method" value="X-ray"/>
    <property type="resolution" value="2.20 A"/>
    <property type="chains" value="A/B=1-159"/>
</dbReference>
<dbReference type="PDB" id="4EJ1">
    <property type="method" value="X-ray"/>
    <property type="resolution" value="1.75 A"/>
    <property type="chains" value="A/B=1-159"/>
</dbReference>
<dbReference type="PDB" id="4FHB">
    <property type="method" value="X-ray"/>
    <property type="resolution" value="2.80 A"/>
    <property type="chains" value="A=1-159"/>
</dbReference>
<dbReference type="PDB" id="4GH8">
    <property type="method" value="X-ray"/>
    <property type="resolution" value="1.85 A"/>
    <property type="chains" value="A/B=1-158"/>
</dbReference>
<dbReference type="PDB" id="4I13">
    <property type="method" value="X-ray"/>
    <property type="resolution" value="1.60 A"/>
    <property type="chains" value="A=1-159"/>
</dbReference>
<dbReference type="PDB" id="4I1N">
    <property type="method" value="X-ray"/>
    <property type="resolution" value="1.89 A"/>
    <property type="chains" value="A=1-159"/>
</dbReference>
<dbReference type="PDB" id="4KJJ">
    <property type="method" value="X-ray"/>
    <property type="resolution" value="1.15 A"/>
    <property type="chains" value="A=1-159"/>
</dbReference>
<dbReference type="PDB" id="4KJK">
    <property type="method" value="X-ray"/>
    <property type="resolution" value="1.35 A"/>
    <property type="chains" value="A=1-159"/>
</dbReference>
<dbReference type="PDB" id="4KJL">
    <property type="method" value="X-ray"/>
    <property type="resolution" value="1.38 A"/>
    <property type="chains" value="A=1-159"/>
</dbReference>
<dbReference type="PDB" id="4NX6">
    <property type="method" value="X-ray"/>
    <property type="resolution" value="1.35 A"/>
    <property type="chains" value="A=1-159"/>
</dbReference>
<dbReference type="PDB" id="4NX7">
    <property type="method" value="X-ray"/>
    <property type="resolution" value="1.15 A"/>
    <property type="chains" value="A=1-159"/>
</dbReference>
<dbReference type="PDB" id="4PDJ">
    <property type="method" value="Other"/>
    <property type="resolution" value="1.60 A"/>
    <property type="chains" value="A=1-159"/>
</dbReference>
<dbReference type="PDB" id="4X5F">
    <property type="method" value="X-ray"/>
    <property type="resolution" value="1.70 A"/>
    <property type="chains" value="A/B=1-159"/>
</dbReference>
<dbReference type="PDB" id="4X5G">
    <property type="method" value="X-ray"/>
    <property type="resolution" value="1.90 A"/>
    <property type="chains" value="A/B=1-159"/>
</dbReference>
<dbReference type="PDB" id="4X5H">
    <property type="method" value="X-ray"/>
    <property type="resolution" value="1.90 A"/>
    <property type="chains" value="A=1-159"/>
</dbReference>
<dbReference type="PDB" id="4X5I">
    <property type="method" value="X-ray"/>
    <property type="resolution" value="1.80 A"/>
    <property type="chains" value="A=1-159"/>
</dbReference>
<dbReference type="PDB" id="4X5J">
    <property type="method" value="X-ray"/>
    <property type="resolution" value="1.85 A"/>
    <property type="chains" value="A=1-159"/>
</dbReference>
<dbReference type="PDB" id="5CC9">
    <property type="method" value="X-ray"/>
    <property type="resolution" value="1.20 A"/>
    <property type="chains" value="A=1-159"/>
</dbReference>
<dbReference type="PDB" id="5CCC">
    <property type="method" value="X-ray"/>
    <property type="resolution" value="1.50 A"/>
    <property type="chains" value="A=1-159"/>
</dbReference>
<dbReference type="PDB" id="5DFR">
    <property type="method" value="X-ray"/>
    <property type="resolution" value="2.30 A"/>
    <property type="chains" value="A=1-159"/>
</dbReference>
<dbReference type="PDB" id="5E8Q">
    <property type="method" value="X-ray"/>
    <property type="resolution" value="1.80 A"/>
    <property type="chains" value="A/B=1-159"/>
</dbReference>
<dbReference type="PDB" id="5EAJ">
    <property type="method" value="X-ray"/>
    <property type="resolution" value="1.70 A"/>
    <property type="chains" value="A/B=1-159"/>
</dbReference>
<dbReference type="PDB" id="5SSS">
    <property type="method" value="X-ray"/>
    <property type="resolution" value="1.14 A"/>
    <property type="chains" value="A=1-159"/>
</dbReference>
<dbReference type="PDB" id="5SST">
    <property type="method" value="X-ray"/>
    <property type="resolution" value="1.07 A"/>
    <property type="chains" value="A=1-159"/>
</dbReference>
<dbReference type="PDB" id="5SSU">
    <property type="method" value="X-ray"/>
    <property type="resolution" value="1.12 A"/>
    <property type="chains" value="A=1-159"/>
</dbReference>
<dbReference type="PDB" id="5SSV">
    <property type="method" value="X-ray"/>
    <property type="resolution" value="1.08 A"/>
    <property type="chains" value="A=1-159"/>
</dbReference>
<dbReference type="PDB" id="5SSW">
    <property type="method" value="X-ray"/>
    <property type="resolution" value="1.06 A"/>
    <property type="chains" value="A=1-159"/>
</dbReference>
<dbReference type="PDB" id="5UIH">
    <property type="method" value="X-ray"/>
    <property type="resolution" value="1.65 A"/>
    <property type="chains" value="A=1-159"/>
</dbReference>
<dbReference type="PDB" id="5UII">
    <property type="method" value="X-ray"/>
    <property type="resolution" value="1.35 A"/>
    <property type="chains" value="A=2-159"/>
</dbReference>
<dbReference type="PDB" id="5UIO">
    <property type="method" value="X-ray"/>
    <property type="resolution" value="1.93 A"/>
    <property type="chains" value="A/B/C/D/E=1-159"/>
</dbReference>
<dbReference type="PDB" id="5UIP">
    <property type="method" value="X-ray"/>
    <property type="resolution" value="1.90 A"/>
    <property type="chains" value="A/B=2-159"/>
</dbReference>
<dbReference type="PDB" id="5UJX">
    <property type="method" value="X-ray"/>
    <property type="resolution" value="1.80 A"/>
    <property type="chains" value="A/B=1-159"/>
</dbReference>
<dbReference type="PDB" id="5W3Q">
    <property type="method" value="X-ray"/>
    <property type="resolution" value="1.40 A"/>
    <property type="chains" value="A=1-159"/>
</dbReference>
<dbReference type="PDB" id="5Z6F">
    <property type="method" value="X-ray"/>
    <property type="resolution" value="1.80 A"/>
    <property type="chains" value="A=1-159"/>
</dbReference>
<dbReference type="PDB" id="5Z6J">
    <property type="method" value="X-ray"/>
    <property type="resolution" value="1.80 A"/>
    <property type="chains" value="A=1-159"/>
</dbReference>
<dbReference type="PDB" id="5Z6K">
    <property type="method" value="X-ray"/>
    <property type="resolution" value="1.80 A"/>
    <property type="chains" value="A=1-159"/>
</dbReference>
<dbReference type="PDB" id="5Z6L">
    <property type="method" value="X-ray"/>
    <property type="resolution" value="1.90 A"/>
    <property type="chains" value="A=1-159"/>
</dbReference>
<dbReference type="PDB" id="5Z6M">
    <property type="method" value="X-ray"/>
    <property type="resolution" value="2.20 A"/>
    <property type="chains" value="A=1-159"/>
</dbReference>
<dbReference type="PDB" id="6CQA">
    <property type="method" value="X-ray"/>
    <property type="resolution" value="2.20 A"/>
    <property type="chains" value="A=1-159"/>
</dbReference>
<dbReference type="PDB" id="6CW7">
    <property type="method" value="X-ray"/>
    <property type="resolution" value="1.03 A"/>
    <property type="chains" value="A=1-159"/>
</dbReference>
<dbReference type="PDB" id="6CXK">
    <property type="method" value="X-ray"/>
    <property type="resolution" value="1.11 A"/>
    <property type="chains" value="A=1-159"/>
</dbReference>
<dbReference type="PDB" id="6CYV">
    <property type="method" value="X-ray"/>
    <property type="resolution" value="1.30 A"/>
    <property type="chains" value="A=1-159"/>
</dbReference>
<dbReference type="PDB" id="6DFR">
    <property type="method" value="X-ray"/>
    <property type="resolution" value="2.40 A"/>
    <property type="chains" value="A=1-159"/>
</dbReference>
<dbReference type="PDB" id="6MR9">
    <property type="method" value="X-ray"/>
    <property type="resolution" value="1.35 A"/>
    <property type="chains" value="A=1-159"/>
</dbReference>
<dbReference type="PDB" id="6MT8">
    <property type="method" value="X-ray"/>
    <property type="resolution" value="1.35 A"/>
    <property type="chains" value="A=1-159"/>
</dbReference>
<dbReference type="PDB" id="6MTH">
    <property type="method" value="X-ray"/>
    <property type="resolution" value="1.35 A"/>
    <property type="chains" value="A=1-159"/>
</dbReference>
<dbReference type="PDB" id="6RUL">
    <property type="method" value="X-ray"/>
    <property type="resolution" value="2.20 A"/>
    <property type="chains" value="A=11-159"/>
</dbReference>
<dbReference type="PDB" id="6RUM">
    <property type="method" value="X-ray"/>
    <property type="resolution" value="1.60 A"/>
    <property type="chains" value="A=23-159"/>
</dbReference>
<dbReference type="PDB" id="6XG4">
    <property type="method" value="X-ray"/>
    <property type="resolution" value="2.10 A"/>
    <property type="chains" value="A=1-159"/>
</dbReference>
<dbReference type="PDB" id="6XG5">
    <property type="method" value="X-ray"/>
    <property type="resolution" value="1.90 A"/>
    <property type="chains" value="A=1-159"/>
</dbReference>
<dbReference type="PDB" id="7D3Z">
    <property type="method" value="X-ray"/>
    <property type="resolution" value="1.65 A"/>
    <property type="chains" value="A=1-159"/>
</dbReference>
<dbReference type="PDB" id="7D49">
    <property type="method" value="X-ray"/>
    <property type="resolution" value="1.65 A"/>
    <property type="chains" value="A=1-159"/>
</dbReference>
<dbReference type="PDB" id="7D4L">
    <property type="method" value="X-ray"/>
    <property type="resolution" value="1.60 A"/>
    <property type="chains" value="A=1-159"/>
</dbReference>
<dbReference type="PDB" id="7D4X">
    <property type="method" value="X-ray"/>
    <property type="resolution" value="1.60 A"/>
    <property type="chains" value="A=1-159"/>
</dbReference>
<dbReference type="PDB" id="7D6G">
    <property type="method" value="Other"/>
    <property type="resolution" value="1.65 A"/>
    <property type="chains" value="A=1-159"/>
</dbReference>
<dbReference type="PDB" id="7DFR">
    <property type="method" value="X-ray"/>
    <property type="resolution" value="2.50 A"/>
    <property type="chains" value="A=1-159"/>
</dbReference>
<dbReference type="PDB" id="7F3B">
    <property type="method" value="X-ray"/>
    <property type="resolution" value="2.81 A"/>
    <property type="chains" value="A=1-159"/>
</dbReference>
<dbReference type="PDB" id="7FPL">
    <property type="method" value="X-ray"/>
    <property type="resolution" value="1.17 A"/>
    <property type="chains" value="A=1-159"/>
</dbReference>
<dbReference type="PDB" id="7FPM">
    <property type="method" value="X-ray"/>
    <property type="resolution" value="1.04 A"/>
    <property type="chains" value="A=1-159"/>
</dbReference>
<dbReference type="PDB" id="7FPN">
    <property type="method" value="X-ray"/>
    <property type="resolution" value="1.04 A"/>
    <property type="chains" value="A=1-159"/>
</dbReference>
<dbReference type="PDB" id="7FPO">
    <property type="method" value="X-ray"/>
    <property type="resolution" value="1.06 A"/>
    <property type="chains" value="A=1-159"/>
</dbReference>
<dbReference type="PDB" id="7FPP">
    <property type="method" value="X-ray"/>
    <property type="resolution" value="1.03 A"/>
    <property type="chains" value="A=1-159"/>
</dbReference>
<dbReference type="PDB" id="7FPQ">
    <property type="method" value="X-ray"/>
    <property type="resolution" value="1.03 A"/>
    <property type="chains" value="A=1-159"/>
</dbReference>
<dbReference type="PDB" id="7FPR">
    <property type="method" value="X-ray"/>
    <property type="resolution" value="1.07 A"/>
    <property type="chains" value="A=1-159"/>
</dbReference>
<dbReference type="PDB" id="7FPS">
    <property type="method" value="X-ray"/>
    <property type="resolution" value="1.26 A"/>
    <property type="chains" value="A=1-159"/>
</dbReference>
<dbReference type="PDB" id="7FPT">
    <property type="method" value="X-ray"/>
    <property type="resolution" value="1.07 A"/>
    <property type="chains" value="A=1-159"/>
</dbReference>
<dbReference type="PDB" id="7FPU">
    <property type="method" value="X-ray"/>
    <property type="resolution" value="1.05 A"/>
    <property type="chains" value="A=1-159"/>
</dbReference>
<dbReference type="PDB" id="7FPV">
    <property type="method" value="X-ray"/>
    <property type="resolution" value="1.04 A"/>
    <property type="chains" value="A=1-159"/>
</dbReference>
<dbReference type="PDB" id="7FPW">
    <property type="method" value="X-ray"/>
    <property type="resolution" value="1.04 A"/>
    <property type="chains" value="A=1-159"/>
</dbReference>
<dbReference type="PDB" id="7FPX">
    <property type="method" value="X-ray"/>
    <property type="resolution" value="1.06 A"/>
    <property type="chains" value="A=1-159"/>
</dbReference>
<dbReference type="PDB" id="7FPY">
    <property type="method" value="X-ray"/>
    <property type="resolution" value="1.12 A"/>
    <property type="chains" value="A=1-159"/>
</dbReference>
<dbReference type="PDB" id="7FPZ">
    <property type="method" value="X-ray"/>
    <property type="resolution" value="1.32 A"/>
    <property type="chains" value="A=1-159"/>
</dbReference>
<dbReference type="PDB" id="7FQ0">
    <property type="method" value="X-ray"/>
    <property type="resolution" value="1.15 A"/>
    <property type="chains" value="A=1-159"/>
</dbReference>
<dbReference type="PDB" id="7FQ1">
    <property type="method" value="X-ray"/>
    <property type="resolution" value="1.18 A"/>
    <property type="chains" value="A=1-159"/>
</dbReference>
<dbReference type="PDB" id="7FQ2">
    <property type="method" value="X-ray"/>
    <property type="resolution" value="1.07 A"/>
    <property type="chains" value="A=1-159"/>
</dbReference>
<dbReference type="PDB" id="7FQ3">
    <property type="method" value="X-ray"/>
    <property type="resolution" value="1.30 A"/>
    <property type="chains" value="A=1-159"/>
</dbReference>
<dbReference type="PDB" id="7FQ4">
    <property type="method" value="X-ray"/>
    <property type="resolution" value="1.33 A"/>
    <property type="chains" value="A=1-159"/>
</dbReference>
<dbReference type="PDB" id="7FQ5">
    <property type="method" value="X-ray"/>
    <property type="resolution" value="1.35 A"/>
    <property type="chains" value="A=1-159"/>
</dbReference>
<dbReference type="PDB" id="7FQ6">
    <property type="method" value="X-ray"/>
    <property type="resolution" value="1.29 A"/>
    <property type="chains" value="A=1-159"/>
</dbReference>
<dbReference type="PDB" id="7FQ7">
    <property type="method" value="X-ray"/>
    <property type="resolution" value="1.10 A"/>
    <property type="chains" value="A=1-159"/>
</dbReference>
<dbReference type="PDB" id="7FQ8">
    <property type="method" value="X-ray"/>
    <property type="resolution" value="1.21 A"/>
    <property type="chains" value="A=1-159"/>
</dbReference>
<dbReference type="PDB" id="7FQ9">
    <property type="method" value="X-ray"/>
    <property type="resolution" value="1.11 A"/>
    <property type="chains" value="A=1-159"/>
</dbReference>
<dbReference type="PDB" id="7FQA">
    <property type="method" value="X-ray"/>
    <property type="resolution" value="1.08 A"/>
    <property type="chains" value="A=1-159"/>
</dbReference>
<dbReference type="PDB" id="7FQB">
    <property type="method" value="X-ray"/>
    <property type="resolution" value="1.14 A"/>
    <property type="chains" value="A=1-159"/>
</dbReference>
<dbReference type="PDB" id="7FQC">
    <property type="method" value="X-ray"/>
    <property type="resolution" value="1.18 A"/>
    <property type="chains" value="A=1-159"/>
</dbReference>
<dbReference type="PDB" id="7FQD">
    <property type="method" value="X-ray"/>
    <property type="resolution" value="1.17 A"/>
    <property type="chains" value="A=1-159"/>
</dbReference>
<dbReference type="PDB" id="7FQE">
    <property type="method" value="X-ray"/>
    <property type="resolution" value="1.18 A"/>
    <property type="chains" value="A=1-159"/>
</dbReference>
<dbReference type="PDB" id="7FQF">
    <property type="method" value="X-ray"/>
    <property type="resolution" value="1.23 A"/>
    <property type="chains" value="A=1-159"/>
</dbReference>
<dbReference type="PDB" id="7FQG">
    <property type="method" value="X-ray"/>
    <property type="resolution" value="1.19 A"/>
    <property type="chains" value="A=1-159"/>
</dbReference>
<dbReference type="PDB" id="7LVC">
    <property type="method" value="X-ray"/>
    <property type="resolution" value="1.70 A"/>
    <property type="chains" value="A=1-159"/>
</dbReference>
<dbReference type="PDB" id="7MQP">
    <property type="method" value="X-ray"/>
    <property type="resolution" value="2.10 A"/>
    <property type="chains" value="A=1-159"/>
</dbReference>
<dbReference type="PDB" id="7MYM">
    <property type="method" value="X-ray"/>
    <property type="resolution" value="3.04 A"/>
    <property type="chains" value="A/B/C=1-159"/>
</dbReference>
<dbReference type="PDB" id="7NAE">
    <property type="method" value="X-ray"/>
    <property type="resolution" value="2.35 A"/>
    <property type="chains" value="A=1-159"/>
</dbReference>
<dbReference type="PDB" id="7REB">
    <property type="method" value="X-ray"/>
    <property type="resolution" value="1.91 A"/>
    <property type="chains" value="A=1-159"/>
</dbReference>
<dbReference type="PDB" id="8DAI">
    <property type="method" value="X-ray"/>
    <property type="resolution" value="1.14 A"/>
    <property type="chains" value="A=1-159"/>
</dbReference>
<dbReference type="PDB" id="8G4Z">
    <property type="method" value="X-ray"/>
    <property type="resolution" value="1.70 A"/>
    <property type="chains" value="A=1-159"/>
</dbReference>
<dbReference type="PDB" id="8G50">
    <property type="method" value="X-ray"/>
    <property type="resolution" value="1.70 A"/>
    <property type="chains" value="A/B=1-159"/>
</dbReference>
<dbReference type="PDB" id="8HCO">
    <property type="method" value="EM"/>
    <property type="resolution" value="4.10 A"/>
    <property type="chains" value="G=1-159"/>
</dbReference>
<dbReference type="PDB" id="8UCX">
    <property type="method" value="X-ray"/>
    <property type="resolution" value="1.57 A"/>
    <property type="chains" value="A=1-159"/>
</dbReference>
<dbReference type="PDB" id="8UW0">
    <property type="method" value="X-ray"/>
    <property type="resolution" value="0.93 A"/>
    <property type="chains" value="A=1-159"/>
</dbReference>
<dbReference type="PDB" id="8V9R">
    <property type="method" value="EM"/>
    <property type="resolution" value="2.80 A"/>
    <property type="chains" value="S=1-159"/>
</dbReference>
<dbReference type="PDB" id="8VZ4">
    <property type="method" value="X-ray"/>
    <property type="resolution" value="1.25 A"/>
    <property type="chains" value="A/B=1-159"/>
</dbReference>
<dbReference type="PDB" id="9C87">
    <property type="method" value="EM"/>
    <property type="resolution" value="3.70 A"/>
    <property type="chains" value="S=2-159"/>
</dbReference>
<dbReference type="PDB" id="9DAQ">
    <property type="method" value="X-ray"/>
    <property type="resolution" value="2.35 A"/>
    <property type="chains" value="A=1-159"/>
</dbReference>
<dbReference type="PDB" id="9DAR">
    <property type="method" value="X-ray"/>
    <property type="resolution" value="2.17 A"/>
    <property type="chains" value="A=1-159"/>
</dbReference>
<dbReference type="PDB" id="9KZ4">
    <property type="method" value="X-ray"/>
    <property type="resolution" value="1.71 A"/>
    <property type="chains" value="A/B=2-159"/>
</dbReference>
<dbReference type="PDBsum" id="1DDR"/>
<dbReference type="PDBsum" id="1DDS"/>
<dbReference type="PDBsum" id="1DHI"/>
<dbReference type="PDBsum" id="1DHJ"/>
<dbReference type="PDBsum" id="1DRA"/>
<dbReference type="PDBsum" id="1DRB"/>
<dbReference type="PDBsum" id="1DRE"/>
<dbReference type="PDBsum" id="1DRH"/>
<dbReference type="PDBsum" id="1DYH"/>
<dbReference type="PDBsum" id="1DYI"/>
<dbReference type="PDBsum" id="1DYJ"/>
<dbReference type="PDBsum" id="1JOL"/>
<dbReference type="PDBsum" id="1JOM"/>
<dbReference type="PDBsum" id="1RA1"/>
<dbReference type="PDBsum" id="1RA2"/>
<dbReference type="PDBsum" id="1RA3"/>
<dbReference type="PDBsum" id="1RA8"/>
<dbReference type="PDBsum" id="1RA9"/>
<dbReference type="PDBsum" id="1RB2"/>
<dbReference type="PDBsum" id="1RB3"/>
<dbReference type="PDBsum" id="1RC4"/>
<dbReference type="PDBsum" id="1RD7"/>
<dbReference type="PDBsum" id="1RE7"/>
<dbReference type="PDBsum" id="1RF7"/>
<dbReference type="PDBsum" id="1RG7"/>
<dbReference type="PDBsum" id="1RH3"/>
<dbReference type="PDBsum" id="1RX1"/>
<dbReference type="PDBsum" id="1RX2"/>
<dbReference type="PDBsum" id="1RX3"/>
<dbReference type="PDBsum" id="1RX4"/>
<dbReference type="PDBsum" id="1RX5"/>
<dbReference type="PDBsum" id="1RX6"/>
<dbReference type="PDBsum" id="1RX7"/>
<dbReference type="PDBsum" id="1RX8"/>
<dbReference type="PDBsum" id="1RX9"/>
<dbReference type="PDBsum" id="1TDR"/>
<dbReference type="PDBsum" id="2ANO"/>
<dbReference type="PDBsum" id="2ANQ"/>
<dbReference type="PDBsum" id="2D0K"/>
<dbReference type="PDBsum" id="2DRC"/>
<dbReference type="PDBsum" id="2INQ"/>
<dbReference type="PDBsum" id="3DAU"/>
<dbReference type="PDBsum" id="3DRC"/>
<dbReference type="PDBsum" id="3K74"/>
<dbReference type="PDBsum" id="3KFY"/>
<dbReference type="PDBsum" id="3OCH"/>
<dbReference type="PDBsum" id="3QL3"/>
<dbReference type="PDBsum" id="3QYL"/>
<dbReference type="PDBsum" id="3QYO"/>
<dbReference type="PDBsum" id="3R33"/>
<dbReference type="PDBsum" id="4DFR"/>
<dbReference type="PDBsum" id="4EIG"/>
<dbReference type="PDBsum" id="4EIZ"/>
<dbReference type="PDBsum" id="4EJ1"/>
<dbReference type="PDBsum" id="4FHB"/>
<dbReference type="PDBsum" id="4GH8"/>
<dbReference type="PDBsum" id="4I13"/>
<dbReference type="PDBsum" id="4I1N"/>
<dbReference type="PDBsum" id="4KJJ"/>
<dbReference type="PDBsum" id="4KJK"/>
<dbReference type="PDBsum" id="4KJL"/>
<dbReference type="PDBsum" id="4NX6"/>
<dbReference type="PDBsum" id="4NX7"/>
<dbReference type="PDBsum" id="4PDJ"/>
<dbReference type="PDBsum" id="4X5F"/>
<dbReference type="PDBsum" id="4X5G"/>
<dbReference type="PDBsum" id="4X5H"/>
<dbReference type="PDBsum" id="4X5I"/>
<dbReference type="PDBsum" id="4X5J"/>
<dbReference type="PDBsum" id="5CC9"/>
<dbReference type="PDBsum" id="5CCC"/>
<dbReference type="PDBsum" id="5DFR"/>
<dbReference type="PDBsum" id="5E8Q"/>
<dbReference type="PDBsum" id="5EAJ"/>
<dbReference type="PDBsum" id="5SSS"/>
<dbReference type="PDBsum" id="5SST"/>
<dbReference type="PDBsum" id="5SSU"/>
<dbReference type="PDBsum" id="5SSV"/>
<dbReference type="PDBsum" id="5SSW"/>
<dbReference type="PDBsum" id="5UIH"/>
<dbReference type="PDBsum" id="5UII"/>
<dbReference type="PDBsum" id="5UIO"/>
<dbReference type="PDBsum" id="5UIP"/>
<dbReference type="PDBsum" id="5UJX"/>
<dbReference type="PDBsum" id="5W3Q"/>
<dbReference type="PDBsum" id="5Z6F"/>
<dbReference type="PDBsum" id="5Z6J"/>
<dbReference type="PDBsum" id="5Z6K"/>
<dbReference type="PDBsum" id="5Z6L"/>
<dbReference type="PDBsum" id="5Z6M"/>
<dbReference type="PDBsum" id="6CQA"/>
<dbReference type="PDBsum" id="6CW7"/>
<dbReference type="PDBsum" id="6CXK"/>
<dbReference type="PDBsum" id="6CYV"/>
<dbReference type="PDBsum" id="6DFR"/>
<dbReference type="PDBsum" id="6MR9"/>
<dbReference type="PDBsum" id="6MT8"/>
<dbReference type="PDBsum" id="6MTH"/>
<dbReference type="PDBsum" id="6RUL"/>
<dbReference type="PDBsum" id="6RUM"/>
<dbReference type="PDBsum" id="6XG4"/>
<dbReference type="PDBsum" id="6XG5"/>
<dbReference type="PDBsum" id="7D3Z"/>
<dbReference type="PDBsum" id="7D49"/>
<dbReference type="PDBsum" id="7D4L"/>
<dbReference type="PDBsum" id="7D4X"/>
<dbReference type="PDBsum" id="7D6G"/>
<dbReference type="PDBsum" id="7DFR"/>
<dbReference type="PDBsum" id="7F3B"/>
<dbReference type="PDBsum" id="7FPL"/>
<dbReference type="PDBsum" id="7FPM"/>
<dbReference type="PDBsum" id="7FPN"/>
<dbReference type="PDBsum" id="7FPO"/>
<dbReference type="PDBsum" id="7FPP"/>
<dbReference type="PDBsum" id="7FPQ"/>
<dbReference type="PDBsum" id="7FPR"/>
<dbReference type="PDBsum" id="7FPS"/>
<dbReference type="PDBsum" id="7FPT"/>
<dbReference type="PDBsum" id="7FPU"/>
<dbReference type="PDBsum" id="7FPV"/>
<dbReference type="PDBsum" id="7FPW"/>
<dbReference type="PDBsum" id="7FPX"/>
<dbReference type="PDBsum" id="7FPY"/>
<dbReference type="PDBsum" id="7FPZ"/>
<dbReference type="PDBsum" id="7FQ0"/>
<dbReference type="PDBsum" id="7FQ1"/>
<dbReference type="PDBsum" id="7FQ2"/>
<dbReference type="PDBsum" id="7FQ3"/>
<dbReference type="PDBsum" id="7FQ4"/>
<dbReference type="PDBsum" id="7FQ5"/>
<dbReference type="PDBsum" id="7FQ6"/>
<dbReference type="PDBsum" id="7FQ7"/>
<dbReference type="PDBsum" id="7FQ8"/>
<dbReference type="PDBsum" id="7FQ9"/>
<dbReference type="PDBsum" id="7FQA"/>
<dbReference type="PDBsum" id="7FQB"/>
<dbReference type="PDBsum" id="7FQC"/>
<dbReference type="PDBsum" id="7FQD"/>
<dbReference type="PDBsum" id="7FQE"/>
<dbReference type="PDBsum" id="7FQF"/>
<dbReference type="PDBsum" id="7FQG"/>
<dbReference type="PDBsum" id="7LVC"/>
<dbReference type="PDBsum" id="7MQP"/>
<dbReference type="PDBsum" id="7MYM"/>
<dbReference type="PDBsum" id="7NAE"/>
<dbReference type="PDBsum" id="7REB"/>
<dbReference type="PDBsum" id="8DAI"/>
<dbReference type="PDBsum" id="8G4Z"/>
<dbReference type="PDBsum" id="8G50"/>
<dbReference type="PDBsum" id="8HCO"/>
<dbReference type="PDBsum" id="8UCX"/>
<dbReference type="PDBsum" id="8UW0"/>
<dbReference type="PDBsum" id="8V9R"/>
<dbReference type="PDBsum" id="8VZ4"/>
<dbReference type="PDBsum" id="9C87"/>
<dbReference type="PDBsum" id="9DAQ"/>
<dbReference type="PDBsum" id="9DAR"/>
<dbReference type="PDBsum" id="9KZ4"/>
<dbReference type="BMRB" id="P0ABQ4"/>
<dbReference type="SMR" id="P0ABQ4"/>
<dbReference type="BioGRID" id="4262199">
    <property type="interactions" value="302"/>
</dbReference>
<dbReference type="BioGRID" id="849191">
    <property type="interactions" value="7"/>
</dbReference>
<dbReference type="DIP" id="DIP-35824N"/>
<dbReference type="FunCoup" id="P0ABQ4">
    <property type="interactions" value="719"/>
</dbReference>
<dbReference type="IntAct" id="P0ABQ4">
    <property type="interactions" value="16"/>
</dbReference>
<dbReference type="STRING" id="511145.b0048"/>
<dbReference type="BindingDB" id="P0ABQ4"/>
<dbReference type="ChEMBL" id="CHEMBL1809"/>
<dbReference type="ChEMBL" id="CHEMBL2364669"/>
<dbReference type="DrugBank" id="DB07262">
    <property type="generic name" value="1-{[N-(1-Imino-guanidino-methyl)]sulfanylmethyl}-3-trifluoromethyl-benzene"/>
</dbReference>
<dbReference type="DrugBank" id="DB02363">
    <property type="generic name" value="2'-Monophosphoadenosine-5'-Diphosphate"/>
</dbReference>
<dbReference type="DrugBank" id="DB02015">
    <property type="generic name" value="Dihydrofolic Acid"/>
</dbReference>
<dbReference type="DrugBank" id="DB06358">
    <property type="generic name" value="Iclaprim"/>
</dbReference>
<dbReference type="DrugBank" id="DB12769">
    <property type="generic name" value="Lometrexol"/>
</dbReference>
<dbReference type="DrugBank" id="DB03461">
    <property type="generic name" value="Nicotinamide adenine dinucleotide phosphate"/>
</dbReference>
<dbReference type="DrugBank" id="DB00440">
    <property type="generic name" value="Trimethoprim"/>
</dbReference>
<dbReference type="DrugCentral" id="P0ABQ4"/>
<dbReference type="jPOST" id="P0ABQ4"/>
<dbReference type="PaxDb" id="511145-b0048"/>
<dbReference type="ABCD" id="P0ABQ4">
    <property type="antibodies" value="5 sequenced antibodies"/>
</dbReference>
<dbReference type="EnsemblBacteria" id="AAC73159">
    <property type="protein sequence ID" value="AAC73159"/>
    <property type="gene ID" value="b0048"/>
</dbReference>
<dbReference type="GeneID" id="93777387"/>
<dbReference type="GeneID" id="944790"/>
<dbReference type="KEGG" id="ecj:JW0047"/>
<dbReference type="KEGG" id="eco:b0048"/>
<dbReference type="KEGG" id="ecoc:C3026_00250"/>
<dbReference type="PATRIC" id="fig|511145.12.peg.49"/>
<dbReference type="EchoBASE" id="EB0322"/>
<dbReference type="eggNOG" id="COG0262">
    <property type="taxonomic scope" value="Bacteria"/>
</dbReference>
<dbReference type="HOGENOM" id="CLU_043966_5_1_6"/>
<dbReference type="InParanoid" id="P0ABQ4"/>
<dbReference type="OMA" id="RDNQLPW"/>
<dbReference type="OrthoDB" id="9804315at2"/>
<dbReference type="PhylomeDB" id="P0ABQ4"/>
<dbReference type="BioCyc" id="EcoCyc:DIHYDROFOLATEREDUCT-MONOMER"/>
<dbReference type="BioCyc" id="MetaCyc:DIHYDROFOLATEREDUCT-MONOMER"/>
<dbReference type="BRENDA" id="1.5.1.3">
    <property type="organism ID" value="2026"/>
</dbReference>
<dbReference type="SABIO-RK" id="P0ABQ4"/>
<dbReference type="UniPathway" id="UPA00077">
    <property type="reaction ID" value="UER00158"/>
</dbReference>
<dbReference type="EvolutionaryTrace" id="P0ABQ4"/>
<dbReference type="PRO" id="PR:P0ABQ4"/>
<dbReference type="Proteomes" id="UP000000625">
    <property type="component" value="Chromosome"/>
</dbReference>
<dbReference type="GO" id="GO:0005829">
    <property type="term" value="C:cytosol"/>
    <property type="evidence" value="ECO:0000314"/>
    <property type="project" value="EcoCyc"/>
</dbReference>
<dbReference type="GO" id="GO:0004146">
    <property type="term" value="F:dihydrofolate reductase activity"/>
    <property type="evidence" value="ECO:0000314"/>
    <property type="project" value="EcoCyc"/>
</dbReference>
<dbReference type="GO" id="GO:0051871">
    <property type="term" value="F:dihydrofolic acid binding"/>
    <property type="evidence" value="ECO:0000314"/>
    <property type="project" value="CAFA"/>
</dbReference>
<dbReference type="GO" id="GO:0005542">
    <property type="term" value="F:folic acid binding"/>
    <property type="evidence" value="ECO:0000314"/>
    <property type="project" value="CAFA"/>
</dbReference>
<dbReference type="GO" id="GO:0051870">
    <property type="term" value="F:methotrexate binding"/>
    <property type="evidence" value="ECO:0000315"/>
    <property type="project" value="CAFA"/>
</dbReference>
<dbReference type="GO" id="GO:0050661">
    <property type="term" value="F:NADP binding"/>
    <property type="evidence" value="ECO:0000318"/>
    <property type="project" value="GO_Central"/>
</dbReference>
<dbReference type="GO" id="GO:0070401">
    <property type="term" value="F:NADP+ binding"/>
    <property type="evidence" value="ECO:0000314"/>
    <property type="project" value="CAFA"/>
</dbReference>
<dbReference type="GO" id="GO:0070402">
    <property type="term" value="F:NADPH binding"/>
    <property type="evidence" value="ECO:0000314"/>
    <property type="project" value="CAFA"/>
</dbReference>
<dbReference type="GO" id="GO:0009257">
    <property type="term" value="P:10-formyltetrahydrofolate biosynthetic process"/>
    <property type="evidence" value="ECO:0000269"/>
    <property type="project" value="EcoCyc"/>
</dbReference>
<dbReference type="GO" id="GO:0046452">
    <property type="term" value="P:dihydrofolate metabolic process"/>
    <property type="evidence" value="ECO:0000318"/>
    <property type="project" value="GO_Central"/>
</dbReference>
<dbReference type="GO" id="GO:0046656">
    <property type="term" value="P:folic acid biosynthetic process"/>
    <property type="evidence" value="ECO:0000269"/>
    <property type="project" value="EcoCyc"/>
</dbReference>
<dbReference type="GO" id="GO:0046655">
    <property type="term" value="P:folic acid metabolic process"/>
    <property type="evidence" value="ECO:0000318"/>
    <property type="project" value="GO_Central"/>
</dbReference>
<dbReference type="GO" id="GO:0006730">
    <property type="term" value="P:one-carbon metabolic process"/>
    <property type="evidence" value="ECO:0007669"/>
    <property type="project" value="UniProtKB-KW"/>
</dbReference>
<dbReference type="GO" id="GO:0046677">
    <property type="term" value="P:response to antibiotic"/>
    <property type="evidence" value="ECO:0007669"/>
    <property type="project" value="UniProtKB-KW"/>
</dbReference>
<dbReference type="GO" id="GO:0031427">
    <property type="term" value="P:response to methotrexate"/>
    <property type="evidence" value="ECO:0007669"/>
    <property type="project" value="UniProtKB-KW"/>
</dbReference>
<dbReference type="GO" id="GO:0009410">
    <property type="term" value="P:response to xenobiotic stimulus"/>
    <property type="evidence" value="ECO:0000314"/>
    <property type="project" value="EcoliWiki"/>
</dbReference>
<dbReference type="GO" id="GO:0046654">
    <property type="term" value="P:tetrahydrofolate biosynthetic process"/>
    <property type="evidence" value="ECO:0000318"/>
    <property type="project" value="GO_Central"/>
</dbReference>
<dbReference type="CDD" id="cd00209">
    <property type="entry name" value="DHFR"/>
    <property type="match status" value="1"/>
</dbReference>
<dbReference type="DisProt" id="DP00301"/>
<dbReference type="FunFam" id="3.40.430.10:FF:000001">
    <property type="entry name" value="Dihydrofolate reductase"/>
    <property type="match status" value="1"/>
</dbReference>
<dbReference type="Gene3D" id="3.40.430.10">
    <property type="entry name" value="Dihydrofolate Reductase, subunit A"/>
    <property type="match status" value="1"/>
</dbReference>
<dbReference type="InterPro" id="IPR012259">
    <property type="entry name" value="DHFR"/>
</dbReference>
<dbReference type="InterPro" id="IPR024072">
    <property type="entry name" value="DHFR-like_dom_sf"/>
</dbReference>
<dbReference type="InterPro" id="IPR017925">
    <property type="entry name" value="DHFR_CS"/>
</dbReference>
<dbReference type="InterPro" id="IPR001796">
    <property type="entry name" value="DHFR_dom"/>
</dbReference>
<dbReference type="NCBIfam" id="NF008037">
    <property type="entry name" value="PRK10769.1"/>
    <property type="match status" value="1"/>
</dbReference>
<dbReference type="PANTHER" id="PTHR48069">
    <property type="entry name" value="DIHYDROFOLATE REDUCTASE"/>
    <property type="match status" value="1"/>
</dbReference>
<dbReference type="PANTHER" id="PTHR48069:SF3">
    <property type="entry name" value="DIHYDROFOLATE REDUCTASE"/>
    <property type="match status" value="1"/>
</dbReference>
<dbReference type="Pfam" id="PF00186">
    <property type="entry name" value="DHFR_1"/>
    <property type="match status" value="1"/>
</dbReference>
<dbReference type="PIRSF" id="PIRSF000194">
    <property type="entry name" value="DHFR"/>
    <property type="match status" value="1"/>
</dbReference>
<dbReference type="PRINTS" id="PR00070">
    <property type="entry name" value="DHFR"/>
</dbReference>
<dbReference type="SUPFAM" id="SSF53597">
    <property type="entry name" value="Dihydrofolate reductase-like"/>
    <property type="match status" value="1"/>
</dbReference>
<dbReference type="PROSITE" id="PS00075">
    <property type="entry name" value="DHFR_1"/>
    <property type="match status" value="1"/>
</dbReference>
<dbReference type="PROSITE" id="PS51330">
    <property type="entry name" value="DHFR_2"/>
    <property type="match status" value="1"/>
</dbReference>